<comment type="function">
    <text>Required for the transposition of the insertion element.</text>
</comment>
<comment type="similarity">
    <text evidence="1">Belongs to the transposase mutator family.</text>
</comment>
<keyword id="KW-0233">DNA recombination</keyword>
<keyword id="KW-0238">DNA-binding</keyword>
<keyword id="KW-0814">Transposable element</keyword>
<keyword id="KW-0815">Transposition</keyword>
<feature type="chain" id="PRO_0000211356" description="Transposase for insertion sequence element IST2">
    <location>
        <begin position="1"/>
        <end position="296"/>
    </location>
</feature>
<dbReference type="EMBL" id="J03859">
    <property type="protein sequence ID" value="AAA27371.1"/>
    <property type="molecule type" value="Genomic_DNA"/>
</dbReference>
<dbReference type="SMR" id="P35884"/>
<dbReference type="GO" id="GO:0003677">
    <property type="term" value="F:DNA binding"/>
    <property type="evidence" value="ECO:0007669"/>
    <property type="project" value="UniProtKB-KW"/>
</dbReference>
<dbReference type="GO" id="GO:0004803">
    <property type="term" value="F:transposase activity"/>
    <property type="evidence" value="ECO:0007669"/>
    <property type="project" value="InterPro"/>
</dbReference>
<dbReference type="GO" id="GO:0006313">
    <property type="term" value="P:DNA transposition"/>
    <property type="evidence" value="ECO:0007669"/>
    <property type="project" value="InterPro"/>
</dbReference>
<dbReference type="InterPro" id="IPR001207">
    <property type="entry name" value="Transposase_mutator"/>
</dbReference>
<dbReference type="NCBIfam" id="NF033543">
    <property type="entry name" value="transpos_IS256"/>
    <property type="match status" value="1"/>
</dbReference>
<dbReference type="PANTHER" id="PTHR33217:SF9">
    <property type="entry name" value="MUTATOR FAMILY TRANSPOSASE"/>
    <property type="match status" value="1"/>
</dbReference>
<dbReference type="PANTHER" id="PTHR33217">
    <property type="entry name" value="TRANSPOSASE FOR INSERTION SEQUENCE ELEMENT IS1081"/>
    <property type="match status" value="1"/>
</dbReference>
<dbReference type="Pfam" id="PF00872">
    <property type="entry name" value="Transposase_mut"/>
    <property type="match status" value="1"/>
</dbReference>
<dbReference type="PROSITE" id="PS01007">
    <property type="entry name" value="TRANSPOSASE_MUTATOR"/>
    <property type="match status" value="1"/>
</dbReference>
<sequence length="296" mass="33312">MQEALSILLGDEAKGLSPAVLGRLKAEWAQEYAHWQRRSYRKALCLLVGRRYLYEPPCGEDPRICLLVIIGVTAEGKKELVMVSDGLRESKASWLEILRDLQARGLETAPLLAIGDGAMGFWAALDEAYPETGQQRCWVHKTANILNELPKAQQSKAKAALQEIWMAANRQAAEKALDVFVRNYQAKYPKAVAKLEKDRAELLAFYDFPAEHWRHIRTTNAIESTFATVRHRTTRTKNCVSRSSFLGLGFKMLQQAEKRWIGIYAPEKVLQLFAGVKFIDGIPANLTLPDDQQTAA</sequence>
<evidence type="ECO:0000305" key="1"/>
<protein>
    <recommendedName>
        <fullName>Transposase for insertion sequence element IST2</fullName>
    </recommendedName>
</protein>
<accession>P35884</accession>
<reference key="1">
    <citation type="journal article" date="1988" name="Proc. Natl. Acad. Sci. U.S.A.">
        <title>IST2: an insertion sequence from Thiobacillus ferrooxidans.</title>
        <authorList>
            <person name="Yates J.R."/>
            <person name="Cunningham R.P."/>
            <person name="Holmes D.S."/>
        </authorList>
    </citation>
    <scope>NUCLEOTIDE SEQUENCE [GENOMIC DNA]</scope>
    <source>
        <strain>ATCC 19859 / BCRC 13033 / JCM 3863 / NCIMB 9490</strain>
    </source>
</reference>
<organism>
    <name type="scientific">Acidithiobacillus ferrooxidans</name>
    <name type="common">Thiobacillus ferrooxidans</name>
    <dbReference type="NCBI Taxonomy" id="920"/>
    <lineage>
        <taxon>Bacteria</taxon>
        <taxon>Pseudomonadati</taxon>
        <taxon>Pseudomonadota</taxon>
        <taxon>Acidithiobacillia</taxon>
        <taxon>Acidithiobacillales</taxon>
        <taxon>Acidithiobacillaceae</taxon>
        <taxon>Acidithiobacillus</taxon>
    </lineage>
</organism>
<proteinExistence type="inferred from homology"/>
<name>TRA2_ACIFR</name>